<reference key="1">
    <citation type="journal article" date="2003" name="Mol. Microbiol.">
        <title>An integrated analysis of the genome of the hyperthermophilic archaeon Pyrococcus abyssi.</title>
        <authorList>
            <person name="Cohen G.N."/>
            <person name="Barbe V."/>
            <person name="Flament D."/>
            <person name="Galperin M."/>
            <person name="Heilig R."/>
            <person name="Lecompte O."/>
            <person name="Poch O."/>
            <person name="Prieur D."/>
            <person name="Querellou J."/>
            <person name="Ripp R."/>
            <person name="Thierry J.-C."/>
            <person name="Van der Oost J."/>
            <person name="Weissenbach J."/>
            <person name="Zivanovic Y."/>
            <person name="Forterre P."/>
        </authorList>
    </citation>
    <scope>NUCLEOTIDE SEQUENCE [LARGE SCALE GENOMIC DNA]</scope>
    <source>
        <strain>GE5 / Orsay</strain>
    </source>
</reference>
<reference key="2">
    <citation type="journal article" date="2012" name="Curr. Microbiol.">
        <title>Re-annotation of two hyperthermophilic archaea Pyrococcus abyssi GE5 and Pyrococcus furiosus DSM 3638.</title>
        <authorList>
            <person name="Gao J."/>
            <person name="Wang J."/>
        </authorList>
    </citation>
    <scope>GENOME REANNOTATION</scope>
    <source>
        <strain>GE5 / Orsay</strain>
    </source>
</reference>
<protein>
    <recommendedName>
        <fullName evidence="1">Tyrosine--tRNA ligase</fullName>
        <ecNumber evidence="1">6.1.1.1</ecNumber>
    </recommendedName>
    <alternativeName>
        <fullName evidence="1">Tyrosyl-tRNA synthetase</fullName>
        <shortName evidence="1">TyrRS</shortName>
    </alternativeName>
</protein>
<gene>
    <name evidence="1" type="primary">tyrS</name>
    <name type="ordered locus">PYRAB09710</name>
    <name type="ORF">PAB1728</name>
</gene>
<comment type="function">
    <text evidence="1">Catalyzes the attachment of tyrosine to tRNA(Tyr) in a two-step reaction: tyrosine is first activated by ATP to form Tyr-AMP and then transferred to the acceptor end of tRNA(Tyr).</text>
</comment>
<comment type="catalytic activity">
    <reaction evidence="1">
        <text>tRNA(Tyr) + L-tyrosine + ATP = L-tyrosyl-tRNA(Tyr) + AMP + diphosphate + H(+)</text>
        <dbReference type="Rhea" id="RHEA:10220"/>
        <dbReference type="Rhea" id="RHEA-COMP:9706"/>
        <dbReference type="Rhea" id="RHEA-COMP:9707"/>
        <dbReference type="ChEBI" id="CHEBI:15378"/>
        <dbReference type="ChEBI" id="CHEBI:30616"/>
        <dbReference type="ChEBI" id="CHEBI:33019"/>
        <dbReference type="ChEBI" id="CHEBI:58315"/>
        <dbReference type="ChEBI" id="CHEBI:78442"/>
        <dbReference type="ChEBI" id="CHEBI:78536"/>
        <dbReference type="ChEBI" id="CHEBI:456215"/>
        <dbReference type="EC" id="6.1.1.1"/>
    </reaction>
</comment>
<comment type="subunit">
    <text evidence="1">Homodimer.</text>
</comment>
<comment type="subcellular location">
    <subcellularLocation>
        <location evidence="1">Cytoplasm</location>
    </subcellularLocation>
</comment>
<comment type="similarity">
    <text evidence="1">Belongs to the class-I aminoacyl-tRNA synthetase family. TyrS type 4 subfamily.</text>
</comment>
<dbReference type="EC" id="6.1.1.1" evidence="1"/>
<dbReference type="EMBL" id="AJ248286">
    <property type="protein sequence ID" value="CAB49879.1"/>
    <property type="molecule type" value="Genomic_DNA"/>
</dbReference>
<dbReference type="EMBL" id="HE613800">
    <property type="protein sequence ID" value="CCE70377.1"/>
    <property type="molecule type" value="Genomic_DNA"/>
</dbReference>
<dbReference type="PIR" id="B75072">
    <property type="entry name" value="B75072"/>
</dbReference>
<dbReference type="RefSeq" id="WP_010868088.1">
    <property type="nucleotide sequence ID" value="NC_000868.1"/>
</dbReference>
<dbReference type="SMR" id="Q9V027"/>
<dbReference type="STRING" id="272844.PAB1728"/>
<dbReference type="KEGG" id="pab:PAB1728"/>
<dbReference type="PATRIC" id="fig|272844.11.peg.1023"/>
<dbReference type="eggNOG" id="arCOG01886">
    <property type="taxonomic scope" value="Archaea"/>
</dbReference>
<dbReference type="HOGENOM" id="CLU_035267_1_1_2"/>
<dbReference type="OrthoDB" id="8389at2157"/>
<dbReference type="PhylomeDB" id="Q9V027"/>
<dbReference type="Proteomes" id="UP000000810">
    <property type="component" value="Chromosome"/>
</dbReference>
<dbReference type="Proteomes" id="UP000009139">
    <property type="component" value="Chromosome"/>
</dbReference>
<dbReference type="GO" id="GO:0005737">
    <property type="term" value="C:cytoplasm"/>
    <property type="evidence" value="ECO:0007669"/>
    <property type="project" value="UniProtKB-SubCell"/>
</dbReference>
<dbReference type="GO" id="GO:0005524">
    <property type="term" value="F:ATP binding"/>
    <property type="evidence" value="ECO:0007669"/>
    <property type="project" value="UniProtKB-UniRule"/>
</dbReference>
<dbReference type="GO" id="GO:0004831">
    <property type="term" value="F:tyrosine-tRNA ligase activity"/>
    <property type="evidence" value="ECO:0007669"/>
    <property type="project" value="UniProtKB-UniRule"/>
</dbReference>
<dbReference type="GO" id="GO:0006437">
    <property type="term" value="P:tyrosyl-tRNA aminoacylation"/>
    <property type="evidence" value="ECO:0007669"/>
    <property type="project" value="UniProtKB-UniRule"/>
</dbReference>
<dbReference type="CDD" id="cd00805">
    <property type="entry name" value="TyrRS_core"/>
    <property type="match status" value="1"/>
</dbReference>
<dbReference type="Gene3D" id="3.40.50.620">
    <property type="entry name" value="HUPs"/>
    <property type="match status" value="1"/>
</dbReference>
<dbReference type="Gene3D" id="1.10.240.10">
    <property type="entry name" value="Tyrosyl-Transfer RNA Synthetase"/>
    <property type="match status" value="1"/>
</dbReference>
<dbReference type="HAMAP" id="MF_02009">
    <property type="entry name" value="Tyr_tRNA_synth_type4"/>
    <property type="match status" value="1"/>
</dbReference>
<dbReference type="InterPro" id="IPR002305">
    <property type="entry name" value="aa-tRNA-synth_Ic"/>
</dbReference>
<dbReference type="InterPro" id="IPR014729">
    <property type="entry name" value="Rossmann-like_a/b/a_fold"/>
</dbReference>
<dbReference type="InterPro" id="IPR002307">
    <property type="entry name" value="Tyr-tRNA-ligase"/>
</dbReference>
<dbReference type="InterPro" id="IPR023678">
    <property type="entry name" value="Tyr-tRNA-ligase_4"/>
</dbReference>
<dbReference type="InterPro" id="IPR023617">
    <property type="entry name" value="Tyr-tRNA-ligase_arc/euk-type"/>
</dbReference>
<dbReference type="InterPro" id="IPR050489">
    <property type="entry name" value="Tyr-tRNA_synthase"/>
</dbReference>
<dbReference type="NCBIfam" id="NF006330">
    <property type="entry name" value="PRK08560.1"/>
    <property type="match status" value="1"/>
</dbReference>
<dbReference type="PANTHER" id="PTHR46264:SF4">
    <property type="entry name" value="TYROSINE--TRNA LIGASE, CYTOPLASMIC"/>
    <property type="match status" value="1"/>
</dbReference>
<dbReference type="PANTHER" id="PTHR46264">
    <property type="entry name" value="TYROSINE-TRNA LIGASE"/>
    <property type="match status" value="1"/>
</dbReference>
<dbReference type="Pfam" id="PF00579">
    <property type="entry name" value="tRNA-synt_1b"/>
    <property type="match status" value="1"/>
</dbReference>
<dbReference type="PIRSF" id="PIRSF006588">
    <property type="entry name" value="TyrRS_arch_euk"/>
    <property type="match status" value="1"/>
</dbReference>
<dbReference type="SUPFAM" id="SSF52374">
    <property type="entry name" value="Nucleotidylyl transferase"/>
    <property type="match status" value="1"/>
</dbReference>
<organism>
    <name type="scientific">Pyrococcus abyssi (strain GE5 / Orsay)</name>
    <dbReference type="NCBI Taxonomy" id="272844"/>
    <lineage>
        <taxon>Archaea</taxon>
        <taxon>Methanobacteriati</taxon>
        <taxon>Methanobacteriota</taxon>
        <taxon>Thermococci</taxon>
        <taxon>Thermococcales</taxon>
        <taxon>Thermococcaceae</taxon>
        <taxon>Pyrococcus</taxon>
    </lineage>
</organism>
<accession>Q9V027</accession>
<accession>G8ZID6</accession>
<sequence>MDIEERINLVLKKPTEEVLTVENLRHLFEVGAPLQHYIGFEISGYIHLGTGLMAGAKIADFQKAGIKTRIFLADWHSWINDKLGGDLEVIQEVALKYFKVGMEKSIEVMGGDPKKVEFVLASEILENGDYWQTVIDISKNVTLSRVMRSITIMGRQMGESIDFAKLIYPMMQVADIFYQGVTIAHAGMDQRKAHVIAIEVAQKLKYHPIVHNGEKLKPVAVHHHLLLGLQEPPVWPITSEEQFKEIKAQMKMSKSKPYSAVFIHDSPEEIKQKLRKAFCPAREVNYNPVLDWAEHIIFREEPTEFTIHRPAKFGGDVTYTTFEELKKDFAEGKLHPLDLKNAVAEYLIELLKPIREYFERHPEPLELMRSVKITR</sequence>
<proteinExistence type="inferred from homology"/>
<feature type="chain" id="PRO_0000240265" description="Tyrosine--tRNA ligase">
    <location>
        <begin position="1"/>
        <end position="375"/>
    </location>
</feature>
<feature type="short sequence motif" description="'KMSKS' region">
    <location>
        <begin position="251"/>
        <end position="255"/>
    </location>
</feature>
<feature type="binding site" evidence="1">
    <location>
        <position position="37"/>
    </location>
    <ligand>
        <name>L-tyrosine</name>
        <dbReference type="ChEBI" id="CHEBI:58315"/>
    </ligand>
</feature>
<feature type="binding site" evidence="1">
    <location>
        <position position="168"/>
    </location>
    <ligand>
        <name>L-tyrosine</name>
        <dbReference type="ChEBI" id="CHEBI:58315"/>
    </ligand>
</feature>
<feature type="binding site" evidence="1">
    <location>
        <position position="172"/>
    </location>
    <ligand>
        <name>L-tyrosine</name>
        <dbReference type="ChEBI" id="CHEBI:58315"/>
    </ligand>
</feature>
<feature type="binding site" evidence="1">
    <location>
        <position position="175"/>
    </location>
    <ligand>
        <name>L-tyrosine</name>
        <dbReference type="ChEBI" id="CHEBI:58315"/>
    </ligand>
</feature>
<feature type="binding site" evidence="1">
    <location>
        <position position="190"/>
    </location>
    <ligand>
        <name>L-tyrosine</name>
        <dbReference type="ChEBI" id="CHEBI:58315"/>
    </ligand>
</feature>
<feature type="binding site" evidence="1">
    <location>
        <position position="254"/>
    </location>
    <ligand>
        <name>ATP</name>
        <dbReference type="ChEBI" id="CHEBI:30616"/>
    </ligand>
</feature>
<keyword id="KW-0030">Aminoacyl-tRNA synthetase</keyword>
<keyword id="KW-0067">ATP-binding</keyword>
<keyword id="KW-0963">Cytoplasm</keyword>
<keyword id="KW-0436">Ligase</keyword>
<keyword id="KW-0547">Nucleotide-binding</keyword>
<keyword id="KW-0648">Protein biosynthesis</keyword>
<name>SYY_PYRAB</name>
<evidence type="ECO:0000255" key="1">
    <source>
        <dbReference type="HAMAP-Rule" id="MF_02009"/>
    </source>
</evidence>